<feature type="initiator methionine" description="Removed" evidence="3">
    <location>
        <position position="1"/>
    </location>
</feature>
<feature type="chain" id="PRO_0000064205" description="Peptidyl-prolyl cis-trans isomerase cyp18">
    <location>
        <begin position="2"/>
        <end position="166"/>
    </location>
</feature>
<feature type="domain" description="PPIase cyclophilin-type" evidence="1">
    <location>
        <begin position="2"/>
        <end position="164"/>
    </location>
</feature>
<name>PPIB_STRAT</name>
<organism>
    <name type="scientific">Streptomyces antibioticus</name>
    <dbReference type="NCBI Taxonomy" id="1890"/>
    <lineage>
        <taxon>Bacteria</taxon>
        <taxon>Bacillati</taxon>
        <taxon>Actinomycetota</taxon>
        <taxon>Actinomycetes</taxon>
        <taxon>Kitasatosporales</taxon>
        <taxon>Streptomycetaceae</taxon>
        <taxon>Streptomyces</taxon>
    </lineage>
</organism>
<accession>P83221</accession>
<accession>Q6VBU8</accession>
<comment type="function">
    <text evidence="3">PPIases accelerate the folding of proteins. It catalyzes the cis-trans isomerization of proline imidic peptide bonds in oligopeptides.</text>
</comment>
<comment type="catalytic activity">
    <reaction evidence="3">
        <text>[protein]-peptidylproline (omega=180) = [protein]-peptidylproline (omega=0)</text>
        <dbReference type="Rhea" id="RHEA:16237"/>
        <dbReference type="Rhea" id="RHEA-COMP:10747"/>
        <dbReference type="Rhea" id="RHEA-COMP:10748"/>
        <dbReference type="ChEBI" id="CHEBI:83833"/>
        <dbReference type="ChEBI" id="CHEBI:83834"/>
        <dbReference type="EC" id="5.2.1.8"/>
    </reaction>
</comment>
<comment type="activity regulation">
    <text>Inhibition by cyclosporin A with a Ki of 21 mu-mol.</text>
</comment>
<comment type="biophysicochemical properties">
    <phDependence>
        <text>Optimum pH is 8-8.5.</text>
    </phDependence>
</comment>
<comment type="subunit">
    <text evidence="5 6">Monomer.</text>
</comment>
<comment type="subcellular location">
    <subcellularLocation>
        <location evidence="4">Cytoplasm</location>
    </subcellularLocation>
</comment>
<comment type="similarity">
    <text evidence="2">Belongs to the cyclophilin-type PPIase family.</text>
</comment>
<comment type="caution">
    <text evidence="7">Was originally thought to have an endonuclease activity.</text>
</comment>
<reference key="1">
    <citation type="journal article" date="2004" name="FEBS Lett.">
        <title>Cloning and characterization of a Streptomyces antibioticus ATCC11891 cyclophilin related to Gram negative bacteria cyclophilins.</title>
        <authorList>
            <person name="Manteca A."/>
            <person name="Kamphausen T."/>
            <person name="Fanghanel J."/>
            <person name="Fischer G."/>
            <person name="Sanchez J."/>
        </authorList>
    </citation>
    <scope>NUCLEOTIDE SEQUENCE [GENOMIC DNA]</scope>
    <scope>CHARACTERIZATION</scope>
    <scope>SUBCELLULAR LOCATION</scope>
    <source>
        <strain>ATCC 11891 / DSM 40868 / BCRC 11580 / NCIMB 11506 / PSA 205</strain>
    </source>
</reference>
<reference evidence="6" key="2">
    <citation type="journal article" date="1999" name="J. Biol. Chem.">
        <title>Purification, characterization, and role of nucleases and serine proteases in Streptomyces differentiation. Analogies with the biochemical processes described in late steps of eukaryotic apoptosis.</title>
        <authorList>
            <person name="Nicieza R.G."/>
            <person name="Huergo J."/>
            <person name="Connolly B.A."/>
            <person name="Sanchez J."/>
        </authorList>
    </citation>
    <scope>PROTEIN SEQUENCE OF 2-21</scope>
    <scope>PRELIMINARY CHARACTERIZATION</scope>
    <source>
        <strain>ATCC 11891 / DSM 40868 / BCRC 11580 / NCIMB 11506 / PSA 205</strain>
    </source>
</reference>
<keyword id="KW-0963">Cytoplasm</keyword>
<keyword id="KW-0903">Direct protein sequencing</keyword>
<keyword id="KW-0413">Isomerase</keyword>
<keyword id="KW-0697">Rotamase</keyword>
<protein>
    <recommendedName>
        <fullName>Peptidyl-prolyl cis-trans isomerase cyp18</fullName>
        <shortName>PPIase cyp18</shortName>
        <shortName>SanCyp18</shortName>
        <ecNumber>5.2.1.8</ecNumber>
    </recommendedName>
    <alternativeName>
        <fullName>Rotamase cyp18</fullName>
    </alternativeName>
</protein>
<evidence type="ECO:0000255" key="1">
    <source>
        <dbReference type="PROSITE-ProRule" id="PRU00156"/>
    </source>
</evidence>
<evidence type="ECO:0000255" key="2">
    <source>
        <dbReference type="RuleBase" id="RU000493"/>
    </source>
</evidence>
<evidence type="ECO:0000269" key="3">
    <source>
    </source>
</evidence>
<evidence type="ECO:0000269" key="4">
    <source>
    </source>
</evidence>
<evidence type="ECO:0000303" key="5">
    <source>
    </source>
</evidence>
<evidence type="ECO:0000305" key="6"/>
<evidence type="ECO:0000305" key="7">
    <source>
    </source>
</evidence>
<evidence type="ECO:0000312" key="8">
    <source>
        <dbReference type="EMBL" id="AAQ88274.1"/>
    </source>
</evidence>
<gene>
    <name evidence="8" type="primary">cyp18</name>
</gene>
<proteinExistence type="evidence at protein level"/>
<sequence length="166" mass="18025">MSTVELNTSAGRIVLELNDAEAPKTVENFLAYVRSGHYDGTIFHRVISDFMIQGGGFTPDMQQKSTLAPIQNEADNGLRNDNYTVAMARTNDPHSATAQFFINVKDNAFLNHTSKTPNGWGYAVFGRVTEGQDVVDAIKGVKTGSSRGHQDVPVQPVVIESAKILG</sequence>
<dbReference type="EC" id="5.2.1.8"/>
<dbReference type="EMBL" id="AY343890">
    <property type="protein sequence ID" value="AAQ88274.1"/>
    <property type="molecule type" value="Genomic_DNA"/>
</dbReference>
<dbReference type="SMR" id="P83221"/>
<dbReference type="MINT" id="P83221"/>
<dbReference type="GO" id="GO:0005737">
    <property type="term" value="C:cytoplasm"/>
    <property type="evidence" value="ECO:0007669"/>
    <property type="project" value="UniProtKB-SubCell"/>
</dbReference>
<dbReference type="GO" id="GO:0005576">
    <property type="term" value="C:extracellular region"/>
    <property type="evidence" value="ECO:0000304"/>
    <property type="project" value="UniProtKB"/>
</dbReference>
<dbReference type="GO" id="GO:0004519">
    <property type="term" value="F:endonuclease activity"/>
    <property type="evidence" value="ECO:0000314"/>
    <property type="project" value="UniProtKB"/>
</dbReference>
<dbReference type="GO" id="GO:0000287">
    <property type="term" value="F:magnesium ion binding"/>
    <property type="evidence" value="ECO:0000304"/>
    <property type="project" value="UniProtKB"/>
</dbReference>
<dbReference type="GO" id="GO:0003755">
    <property type="term" value="F:peptidyl-prolyl cis-trans isomerase activity"/>
    <property type="evidence" value="ECO:0007669"/>
    <property type="project" value="UniProtKB-KW"/>
</dbReference>
<dbReference type="GO" id="GO:0006308">
    <property type="term" value="P:DNA catabolic process"/>
    <property type="evidence" value="ECO:0000314"/>
    <property type="project" value="UniProtKB"/>
</dbReference>
<dbReference type="GO" id="GO:0006457">
    <property type="term" value="P:protein folding"/>
    <property type="evidence" value="ECO:0007669"/>
    <property type="project" value="InterPro"/>
</dbReference>
<dbReference type="CDD" id="cd01920">
    <property type="entry name" value="cyclophilin_EcCYP_like"/>
    <property type="match status" value="1"/>
</dbReference>
<dbReference type="FunFam" id="2.40.100.10:FF:000004">
    <property type="entry name" value="Peptidyl-prolyl cis-trans isomerase"/>
    <property type="match status" value="1"/>
</dbReference>
<dbReference type="Gene3D" id="2.40.100.10">
    <property type="entry name" value="Cyclophilin-like"/>
    <property type="match status" value="1"/>
</dbReference>
<dbReference type="InterPro" id="IPR029000">
    <property type="entry name" value="Cyclophilin-like_dom_sf"/>
</dbReference>
<dbReference type="InterPro" id="IPR024936">
    <property type="entry name" value="Cyclophilin-type_PPIase"/>
</dbReference>
<dbReference type="InterPro" id="IPR020892">
    <property type="entry name" value="Cyclophilin-type_PPIase_CS"/>
</dbReference>
<dbReference type="InterPro" id="IPR002130">
    <property type="entry name" value="Cyclophilin-type_PPIase_dom"/>
</dbReference>
<dbReference type="InterPro" id="IPR044665">
    <property type="entry name" value="E_coli_cyclophilin_A-like"/>
</dbReference>
<dbReference type="PANTHER" id="PTHR43246">
    <property type="entry name" value="PEPTIDYL-PROLYL CIS-TRANS ISOMERASE CYP38, CHLOROPLASTIC"/>
    <property type="match status" value="1"/>
</dbReference>
<dbReference type="Pfam" id="PF00160">
    <property type="entry name" value="Pro_isomerase"/>
    <property type="match status" value="1"/>
</dbReference>
<dbReference type="PIRSF" id="PIRSF001467">
    <property type="entry name" value="Peptidylpro_ismrse"/>
    <property type="match status" value="1"/>
</dbReference>
<dbReference type="PRINTS" id="PR00153">
    <property type="entry name" value="CSAPPISMRASE"/>
</dbReference>
<dbReference type="SUPFAM" id="SSF50891">
    <property type="entry name" value="Cyclophilin-like"/>
    <property type="match status" value="1"/>
</dbReference>
<dbReference type="PROSITE" id="PS00170">
    <property type="entry name" value="CSA_PPIASE_1"/>
    <property type="match status" value="1"/>
</dbReference>
<dbReference type="PROSITE" id="PS50072">
    <property type="entry name" value="CSA_PPIASE_2"/>
    <property type="match status" value="1"/>
</dbReference>